<gene>
    <name evidence="2 14" type="primary">araD</name>
    <name type="ordered locus">b0061</name>
    <name type="ordered locus">JW0060</name>
</gene>
<organism>
    <name type="scientific">Escherichia coli (strain K12)</name>
    <dbReference type="NCBI Taxonomy" id="83333"/>
    <lineage>
        <taxon>Bacteria</taxon>
        <taxon>Pseudomonadati</taxon>
        <taxon>Pseudomonadota</taxon>
        <taxon>Gammaproteobacteria</taxon>
        <taxon>Enterobacterales</taxon>
        <taxon>Enterobacteriaceae</taxon>
        <taxon>Escherichia</taxon>
    </lineage>
</organism>
<reference key="1">
    <citation type="journal article" date="1986" name="Gene">
        <title>The organization of the araBAD operon of Escherichia coli.</title>
        <authorList>
            <person name="Lee N."/>
            <person name="Gielow W."/>
            <person name="Martin R."/>
            <person name="Hamilton E."/>
            <person name="Fowler A."/>
        </authorList>
    </citation>
    <scope>NUCLEOTIDE SEQUENCE [GENOMIC DNA]</scope>
    <source>
        <strain>B</strain>
    </source>
</reference>
<reference key="2">
    <citation type="journal article" date="1990" name="DNA Cell Biol.">
        <title>Nucleotide sequence and deletion analysis of the polB gene of Escherichia coli.</title>
        <authorList>
            <person name="Chen H."/>
            <person name="Sun Y."/>
            <person name="Stark T."/>
            <person name="Beattie W."/>
            <person name="Moses R.E."/>
        </authorList>
    </citation>
    <scope>NUCLEOTIDE SEQUENCE [GENOMIC DNA]</scope>
    <source>
        <strain>K12</strain>
    </source>
</reference>
<reference key="3">
    <citation type="journal article" date="1990" name="Nucleic Acids Res.">
        <title>Nucleotide sequence of the araD gene of Escherichia coli K12 encoding the L-ribulose 5-phosphate 4-epimerase.</title>
        <authorList>
            <person name="Mineno J."/>
            <person name="Fukui H."/>
            <person name="Ishino Y."/>
            <person name="Kato I."/>
            <person name="Shinagawa H."/>
        </authorList>
    </citation>
    <scope>NUCLEOTIDE SEQUENCE [GENOMIC DNA]</scope>
    <source>
        <strain>K12</strain>
    </source>
</reference>
<reference key="4">
    <citation type="journal article" date="1992" name="Nucleic Acids Res.">
        <title>Systematic sequencing of the Escherichia coli genome: analysis of the 0-2.4 min region.</title>
        <authorList>
            <person name="Yura T."/>
            <person name="Mori H."/>
            <person name="Nagai H."/>
            <person name="Nagata T."/>
            <person name="Ishihama A."/>
            <person name="Fujita N."/>
            <person name="Isono K."/>
            <person name="Mizobuchi K."/>
            <person name="Nakata A."/>
        </authorList>
    </citation>
    <scope>NUCLEOTIDE SEQUENCE [LARGE SCALE GENOMIC DNA]</scope>
    <source>
        <strain>K12</strain>
    </source>
</reference>
<reference key="5">
    <citation type="journal article" date="1997" name="Science">
        <title>The complete genome sequence of Escherichia coli K-12.</title>
        <authorList>
            <person name="Blattner F.R."/>
            <person name="Plunkett G. III"/>
            <person name="Bloch C.A."/>
            <person name="Perna N.T."/>
            <person name="Burland V."/>
            <person name="Riley M."/>
            <person name="Collado-Vides J."/>
            <person name="Glasner J.D."/>
            <person name="Rode C.K."/>
            <person name="Mayhew G.F."/>
            <person name="Gregor J."/>
            <person name="Davis N.W."/>
            <person name="Kirkpatrick H.A."/>
            <person name="Goeden M.A."/>
            <person name="Rose D.J."/>
            <person name="Mau B."/>
            <person name="Shao Y."/>
        </authorList>
    </citation>
    <scope>NUCLEOTIDE SEQUENCE [LARGE SCALE GENOMIC DNA]</scope>
    <source>
        <strain>K12 / MG1655 / ATCC 47076</strain>
    </source>
</reference>
<reference key="6">
    <citation type="journal article" date="2006" name="Mol. Syst. Biol.">
        <title>Highly accurate genome sequences of Escherichia coli K-12 strains MG1655 and W3110.</title>
        <authorList>
            <person name="Hayashi K."/>
            <person name="Morooka N."/>
            <person name="Yamamoto Y."/>
            <person name="Fujita K."/>
            <person name="Isono K."/>
            <person name="Choi S."/>
            <person name="Ohtsubo E."/>
            <person name="Baba T."/>
            <person name="Wanner B.L."/>
            <person name="Mori H."/>
            <person name="Horiuchi T."/>
        </authorList>
    </citation>
    <scope>NUCLEOTIDE SEQUENCE [LARGE SCALE GENOMIC DNA]</scope>
    <source>
        <strain>K12 / W3110 / ATCC 27325 / DSM 5911</strain>
    </source>
</reference>
<reference key="7">
    <citation type="journal article" date="1995" name="Protein Sci.">
        <title>Purification and preliminary X-ray crystallographic studies of recombinant L-ribulose-5-phosphate 4-epimerase from Escherichia coli.</title>
        <authorList>
            <person name="Andersson A."/>
            <person name="Schneider G."/>
            <person name="Lindqvist Y."/>
        </authorList>
    </citation>
    <scope>PROTEIN SEQUENCE OF 1-8</scope>
    <scope>PRELIMINARY CRYSTALLIZATION</scope>
</reference>
<reference key="8">
    <citation type="journal article" date="1991" name="Mol. Gen. Genet.">
        <title>Escherichia coli DNA polymerase II is homologous to alpha-like DNA polymerases.</title>
        <authorList>
            <person name="Iwasaki H."/>
            <person name="Ishino Y."/>
            <person name="Toh H."/>
            <person name="Nakata A."/>
            <person name="Shinagawa H."/>
        </authorList>
    </citation>
    <scope>NUCLEOTIDE SEQUENCE [GENOMIC DNA] OF 158-231</scope>
    <source>
        <strain>K12 / W3110 / ATCC 27325 / DSM 5911</strain>
    </source>
</reference>
<reference key="9">
    <citation type="journal article" date="1990" name="Proc. Natl. Acad. Sci. U.S.A.">
        <title>DNA polymerase II is encoded by the DNA damage-inducible dinA gene of Escherichia coli.</title>
        <authorList>
            <person name="Bonner C.A."/>
            <person name="Hays S."/>
            <person name="McEntee K."/>
            <person name="Goodman M.F."/>
        </authorList>
    </citation>
    <scope>NUCLEOTIDE SEQUENCE [GENOMIC DNA] OF 222-231</scope>
    <source>
        <strain>K12</strain>
    </source>
</reference>
<reference key="10">
    <citation type="journal article" date="1962" name="J. Bacteriol.">
        <title>L-Arabinose-sensitive, L-ribulose 5-phosphate 4-epimerase-deficient mutants of Escherichia coli.</title>
        <authorList>
            <person name="Englesberg E."/>
            <person name="Anderson R.L."/>
            <person name="Weinberg R."/>
            <person name="Lee N."/>
            <person name="Hoffee P."/>
            <person name="Huttenhauer G."/>
            <person name="Boyer H."/>
        </authorList>
    </citation>
    <scope>FUNCTION</scope>
    <scope>DISRUPTION PHENOTYPE</scope>
    <scope>PATHWAY</scope>
</reference>
<reference key="11">
    <citation type="journal article" date="1968" name="J. Biol. Chem.">
        <title>Crystalline L-ribulose 5-phosphate 4-epimerase from Escherichia coli.</title>
        <authorList>
            <person name="Lee N."/>
            <person name="Patrick J.W."/>
            <person name="Masson M."/>
        </authorList>
    </citation>
    <scope>FUNCTION</scope>
    <scope>CATALYTIC ACTIVITY</scope>
    <scope>BIOPHYSICOCHEMICAL PROPERTIES</scope>
    <scope>SUBUNIT</scope>
    <source>
        <strain>B/R</strain>
    </source>
</reference>
<reference key="12">
    <citation type="journal article" date="1977" name="Cell">
        <title>The araC promoter: transcription, mapping and interaction with the araBAD promoter.</title>
        <authorList>
            <person name="Hirsh J."/>
            <person name="Schleif R."/>
        </authorList>
    </citation>
    <scope>INDUCTION</scope>
</reference>
<reference key="13">
    <citation type="journal article" date="1987" name="Proc. Natl. Acad. Sci. U.S.A.">
        <title>Arabinose-induced binding of AraC protein to araI2 activates the araBAD operon promoter.</title>
        <authorList>
            <person name="Lee N."/>
            <person name="Francklyn C."/>
            <person name="Hamilton E.P."/>
        </authorList>
    </citation>
    <scope>INDUCTION</scope>
</reference>
<reference key="14">
    <citation type="journal article" date="1995" name="J. Bacteriol.">
        <title>In vivo induction kinetics of the arabinose promoters in Escherichia coli.</title>
        <authorList>
            <person name="Johnson C.M."/>
            <person name="Schleif R.F."/>
        </authorList>
    </citation>
    <scope>INDUCTION</scope>
</reference>
<reference key="15">
    <citation type="journal article" date="1997" name="Electrophoresis">
        <title>Escherichia coli proteome analysis using the gene-protein database.</title>
        <authorList>
            <person name="VanBogelen R.A."/>
            <person name="Abshire K.Z."/>
            <person name="Moldover B."/>
            <person name="Olson E.R."/>
            <person name="Neidhardt F.C."/>
        </authorList>
    </citation>
    <scope>IDENTIFICATION BY 2D-GEL</scope>
</reference>
<reference key="16">
    <citation type="journal article" date="1998" name="Biochemistry">
        <title>Epimerization via carbon-carbon bond cleavage. L-ribulose-5-phosphate 4-epimerase as a masked class II aldolase.</title>
        <authorList>
            <person name="Johnson A.E."/>
            <person name="Tanner M.E."/>
        </authorList>
    </citation>
    <scope>FUNCTION</scope>
    <scope>CATALYTIC ACTIVITY</scope>
    <scope>BIOPHYSICOCHEMICAL PROPERTIES</scope>
    <scope>MUTAGENESIS OF ASP-76; HIS-95 AND HIS-97</scope>
    <scope>MASS SPECTROMETRY</scope>
    <scope>COFACTOR</scope>
    <scope>SUBUNIT</scope>
</reference>
<reference key="17">
    <citation type="journal article" date="2000" name="Biochemistry">
        <title>13C and deuterium isotope effects suggest an aldol cleavage mechanism for L-ribulose-5-phosphate 4-epimerase.</title>
        <authorList>
            <person name="Lee L.V."/>
            <person name="Vu M.V."/>
            <person name="Cleland W.W."/>
        </authorList>
    </citation>
    <scope>FUNCTION</scope>
    <scope>CATALYTIC ACTIVITY</scope>
    <scope>BIOPHYSICOCHEMICAL PROPERTIES</scope>
    <scope>REACTION MECHANISM</scope>
</reference>
<reference key="18">
    <citation type="journal article" date="2000" name="Biochemistry">
        <title>Role of metal ions in the reaction catalyzed by L-ribulose-5-phosphate 4-epimerase.</title>
        <authorList>
            <person name="Lee L.V."/>
            <person name="Poyner R.R."/>
            <person name="Vu M.V."/>
            <person name="Cleland W.W."/>
        </authorList>
    </citation>
    <scope>FUNCTION</scope>
    <scope>CATALYTIC ACTIVITY</scope>
    <scope>BIOPHYSICOCHEMICAL PROPERTIES</scope>
    <scope>MUTAGENESIS OF HIS-95; HIS-97 AND TYR-229</scope>
    <scope>COFACTOR</scope>
</reference>
<reference key="19">
    <citation type="journal article" date="2000" name="J. Bacteriol.">
        <title>Role of the yiaR and yiaS genes of Escherichia coli in metabolism of endogenously formed L-xylulose.</title>
        <authorList>
            <person name="Ibanez E."/>
            <person name="Gimenez R."/>
            <person name="Pedraza T."/>
            <person name="Baldoma L."/>
            <person name="Aguilar J."/>
            <person name="Badia J."/>
        </authorList>
    </citation>
    <scope>INDUCTION</scope>
</reference>
<reference key="20">
    <citation type="journal article" date="2001" name="Biochemistry">
        <title>The structure of L-ribulose-5-phosphate 4-epimerase: an aldolase-like platform for epimerization.</title>
        <authorList>
            <person name="Luo Y."/>
            <person name="Samuel J."/>
            <person name="Mosimann S.C."/>
            <person name="Lee J.E."/>
            <person name="Tanner M.E."/>
            <person name="Strynadka N.C."/>
        </authorList>
    </citation>
    <scope>X-RAY CRYSTALLOGRAPHY (2.4 ANGSTROMS) IN COMPLEX WITH ZINC ION</scope>
    <scope>COFACTOR</scope>
    <scope>SUBUNIT</scope>
</reference>
<reference key="21">
    <citation type="journal article" date="2001" name="Biochemistry">
        <title>Catalysis and binding in L-ribulose-5-phosphate 4-epimerase: a comparison with L-fuculose-1-phosphate aldolase.</title>
        <authorList>
            <person name="Samuel J."/>
            <person name="Luo Y."/>
            <person name="Morgan P.M."/>
            <person name="Strynadka N.C."/>
            <person name="Tanner M.E."/>
        </authorList>
    </citation>
    <scope>X-RAY CRYSTALLOGRAPHY (2.1 ANGSTROMS) OF MUTANT ASN-120 IN COMPLEX WITH ZINC ION</scope>
    <scope>FUNCTION</scope>
    <scope>CATALYTIC ACTIVITY</scope>
    <scope>BIOPHYSICOCHEMICAL PROPERTIES</scope>
    <scope>MUTAGENESIS OF ASN-28; LYS-42; ASP-76; THR-116; ASP-120; GLU-142; HIS-218 AND TYR-229</scope>
    <scope>ACTIVITY REGULATION</scope>
    <scope>COFACTOR</scope>
    <scope>ACTIVE SITE</scope>
    <scope>REACTION MECHANISM</scope>
    <scope>SUBUNIT</scope>
</reference>
<proteinExistence type="evidence at protein level"/>
<accession>P08203</accession>
<sequence>MLEDLKRQVLEANLALPKHNLVTLTWGNVSAVDRERGVFVIKPSGVDYSVMTADDMVVVSIETGEVVEGTKKPSSDTPTHRLLYQAFPSIGGIVHTHSRHATIWAQAGQSIPATGTTHADYFYGTIPCTRKMTDAEINGEYEWETGNVIVETFEKQGIDAAQMPGVLVHSHGPFAWGKNAEDAVHNAIVLEEVAYMGIFCRQLAPQLPDMQQTLLDKHYLRKHGAKAYYGQ</sequence>
<protein>
    <recommendedName>
        <fullName evidence="2 14">L-ribulose-5-phosphate 4-epimerase AraD</fullName>
        <ecNumber evidence="2 3 4 7 11 13">5.1.3.4</ecNumber>
    </recommendedName>
    <alternativeName>
        <fullName evidence="2">Phosphoribulose isomerase</fullName>
    </alternativeName>
</protein>
<keyword id="KW-0002">3D-structure</keyword>
<keyword id="KW-0054">Arabinose catabolism</keyword>
<keyword id="KW-0119">Carbohydrate metabolism</keyword>
<keyword id="KW-0170">Cobalt</keyword>
<keyword id="KW-0903">Direct protein sequencing</keyword>
<keyword id="KW-0413">Isomerase</keyword>
<keyword id="KW-0464">Manganese</keyword>
<keyword id="KW-0479">Metal-binding</keyword>
<keyword id="KW-1185">Reference proteome</keyword>
<keyword id="KW-0862">Zinc</keyword>
<name>ARAD_ECOLI</name>
<dbReference type="EC" id="5.1.3.4" evidence="2 3 4 7 11 13"/>
<dbReference type="EMBL" id="M15263">
    <property type="protein sequence ID" value="AAA23464.1"/>
    <property type="molecule type" value="Genomic_DNA"/>
</dbReference>
<dbReference type="EMBL" id="M35371">
    <property type="status" value="NOT_ANNOTATED_CDS"/>
    <property type="molecule type" value="Genomic_DNA"/>
</dbReference>
<dbReference type="EMBL" id="M62646">
    <property type="protein sequence ID" value="AAA24405.1"/>
    <property type="molecule type" value="Genomic_DNA"/>
</dbReference>
<dbReference type="EMBL" id="U00096">
    <property type="protein sequence ID" value="AAC73172.1"/>
    <property type="molecule type" value="Genomic_DNA"/>
</dbReference>
<dbReference type="EMBL" id="AP009048">
    <property type="protein sequence ID" value="BAB96630.1"/>
    <property type="molecule type" value="Genomic_DNA"/>
</dbReference>
<dbReference type="EMBL" id="M37727">
    <property type="protein sequence ID" value="AAA23683.1"/>
    <property type="molecule type" value="Genomic_DNA"/>
</dbReference>
<dbReference type="EMBL" id="M38283">
    <property type="protein sequence ID" value="AAA63763.1"/>
    <property type="molecule type" value="Genomic_DNA"/>
</dbReference>
<dbReference type="EMBL" id="X56048">
    <property type="protein sequence ID" value="CAA39519.1"/>
    <property type="molecule type" value="Genomic_DNA"/>
</dbReference>
<dbReference type="PIR" id="E64727">
    <property type="entry name" value="ISECP4"/>
</dbReference>
<dbReference type="RefSeq" id="NP_414603.1">
    <property type="nucleotide sequence ID" value="NC_000913.3"/>
</dbReference>
<dbReference type="RefSeq" id="WP_000888666.1">
    <property type="nucleotide sequence ID" value="NZ_STEB01000010.1"/>
</dbReference>
<dbReference type="PDB" id="1JDI">
    <property type="method" value="X-ray"/>
    <property type="resolution" value="2.40 A"/>
    <property type="chains" value="A/B/C/D/E/F=1-231"/>
</dbReference>
<dbReference type="PDB" id="1K0W">
    <property type="method" value="X-ray"/>
    <property type="resolution" value="2.10 A"/>
    <property type="chains" value="A/B/C/D/E/F=1-231"/>
</dbReference>
<dbReference type="PDBsum" id="1JDI"/>
<dbReference type="PDBsum" id="1K0W"/>
<dbReference type="SMR" id="P08203"/>
<dbReference type="BioGRID" id="4263043">
    <property type="interactions" value="7"/>
</dbReference>
<dbReference type="DIP" id="DIP-9126N"/>
<dbReference type="FunCoup" id="P08203">
    <property type="interactions" value="676"/>
</dbReference>
<dbReference type="IntAct" id="P08203">
    <property type="interactions" value="4"/>
</dbReference>
<dbReference type="STRING" id="511145.b0061"/>
<dbReference type="PaxDb" id="511145-b0061"/>
<dbReference type="EnsemblBacteria" id="AAC73172">
    <property type="protein sequence ID" value="AAC73172"/>
    <property type="gene ID" value="b0061"/>
</dbReference>
<dbReference type="GeneID" id="945294"/>
<dbReference type="KEGG" id="ecj:JW0060"/>
<dbReference type="KEGG" id="eco:b0061"/>
<dbReference type="PATRIC" id="fig|1411691.4.peg.2222"/>
<dbReference type="EchoBASE" id="EB0053"/>
<dbReference type="eggNOG" id="COG0235">
    <property type="taxonomic scope" value="Bacteria"/>
</dbReference>
<dbReference type="HOGENOM" id="CLU_006033_5_0_6"/>
<dbReference type="InParanoid" id="P08203"/>
<dbReference type="OMA" id="PCVLTMM"/>
<dbReference type="OrthoDB" id="9786287at2"/>
<dbReference type="PhylomeDB" id="P08203"/>
<dbReference type="BioCyc" id="EcoCyc:RIBULPEPIM-MONOMER"/>
<dbReference type="BioCyc" id="MetaCyc:RIBULPEPIM-MONOMER"/>
<dbReference type="SABIO-RK" id="P08203"/>
<dbReference type="UniPathway" id="UPA00145">
    <property type="reaction ID" value="UER00567"/>
</dbReference>
<dbReference type="EvolutionaryTrace" id="P08203"/>
<dbReference type="PRO" id="PR:P08203"/>
<dbReference type="Proteomes" id="UP000000625">
    <property type="component" value="Chromosome"/>
</dbReference>
<dbReference type="GO" id="GO:0005829">
    <property type="term" value="C:cytosol"/>
    <property type="evidence" value="ECO:0000314"/>
    <property type="project" value="EcoCyc"/>
</dbReference>
<dbReference type="GO" id="GO:0032991">
    <property type="term" value="C:protein-containing complex"/>
    <property type="evidence" value="ECO:0000314"/>
    <property type="project" value="EcoCyc"/>
</dbReference>
<dbReference type="GO" id="GO:0016832">
    <property type="term" value="F:aldehyde-lyase activity"/>
    <property type="evidence" value="ECO:0000318"/>
    <property type="project" value="GO_Central"/>
</dbReference>
<dbReference type="GO" id="GO:0042802">
    <property type="term" value="F:identical protein binding"/>
    <property type="evidence" value="ECO:0000314"/>
    <property type="project" value="EcoCyc"/>
</dbReference>
<dbReference type="GO" id="GO:0008742">
    <property type="term" value="F:L-ribulose-phosphate 4-epimerase activity"/>
    <property type="evidence" value="ECO:0000314"/>
    <property type="project" value="UniProtKB"/>
</dbReference>
<dbReference type="GO" id="GO:0008270">
    <property type="term" value="F:zinc ion binding"/>
    <property type="evidence" value="ECO:0000314"/>
    <property type="project" value="UniProtKB"/>
</dbReference>
<dbReference type="GO" id="GO:0019569">
    <property type="term" value="P:L-arabinose catabolic process to xylulose 5-phosphate"/>
    <property type="evidence" value="ECO:0000315"/>
    <property type="project" value="UniProtKB"/>
</dbReference>
<dbReference type="GO" id="GO:0019324">
    <property type="term" value="P:L-lyxose metabolic process"/>
    <property type="evidence" value="ECO:0000315"/>
    <property type="project" value="EcoCyc"/>
</dbReference>
<dbReference type="GO" id="GO:0019323">
    <property type="term" value="P:pentose catabolic process"/>
    <property type="evidence" value="ECO:0000318"/>
    <property type="project" value="GO_Central"/>
</dbReference>
<dbReference type="CDD" id="cd00398">
    <property type="entry name" value="Aldolase_II"/>
    <property type="match status" value="1"/>
</dbReference>
<dbReference type="FunFam" id="3.40.225.10:FF:000001">
    <property type="entry name" value="L-ribulose-5-phosphate 4-epimerase UlaF"/>
    <property type="match status" value="1"/>
</dbReference>
<dbReference type="Gene3D" id="3.40.225.10">
    <property type="entry name" value="Class II aldolase/adducin N-terminal domain"/>
    <property type="match status" value="1"/>
</dbReference>
<dbReference type="HAMAP" id="MF_00989">
    <property type="entry name" value="AraD_entero"/>
    <property type="match status" value="1"/>
</dbReference>
<dbReference type="InterPro" id="IPR050197">
    <property type="entry name" value="Aldolase_class_II_sugar_metab"/>
</dbReference>
<dbReference type="InterPro" id="IPR001303">
    <property type="entry name" value="Aldolase_II/adducin_N"/>
</dbReference>
<dbReference type="InterPro" id="IPR036409">
    <property type="entry name" value="Aldolase_II/adducin_N_sf"/>
</dbReference>
<dbReference type="InterPro" id="IPR004661">
    <property type="entry name" value="AraD"/>
</dbReference>
<dbReference type="InterPro" id="IPR033748">
    <property type="entry name" value="AraD_entero"/>
</dbReference>
<dbReference type="NCBIfam" id="TIGR00760">
    <property type="entry name" value="araD"/>
    <property type="match status" value="1"/>
</dbReference>
<dbReference type="NCBIfam" id="NF006047">
    <property type="entry name" value="PRK08193.1"/>
    <property type="match status" value="1"/>
</dbReference>
<dbReference type="NCBIfam" id="NF009002">
    <property type="entry name" value="PRK12347.1"/>
    <property type="match status" value="1"/>
</dbReference>
<dbReference type="NCBIfam" id="NF009003">
    <property type="entry name" value="PRK12348.1"/>
    <property type="match status" value="1"/>
</dbReference>
<dbReference type="PANTHER" id="PTHR22789">
    <property type="entry name" value="FUCULOSE PHOSPHATE ALDOLASE"/>
    <property type="match status" value="1"/>
</dbReference>
<dbReference type="PANTHER" id="PTHR22789:SF15">
    <property type="entry name" value="L-RIBULOSE-5-PHOSPHATE 4-EPIMERASE ARAD"/>
    <property type="match status" value="1"/>
</dbReference>
<dbReference type="Pfam" id="PF00596">
    <property type="entry name" value="Aldolase_II"/>
    <property type="match status" value="1"/>
</dbReference>
<dbReference type="SMART" id="SM01007">
    <property type="entry name" value="Aldolase_II"/>
    <property type="match status" value="1"/>
</dbReference>
<dbReference type="SUPFAM" id="SSF53639">
    <property type="entry name" value="AraD/HMP-PK domain-like"/>
    <property type="match status" value="1"/>
</dbReference>
<comment type="function">
    <text evidence="2 3 4 7 8 11 13">Involved in the degradation of L-arabinose (PubMed:13890280). Catalyzes the interconversion of L-ribulose 5-phosphate (LRu5P) and D-xylulose 5-phosphate (D-Xu5P) via a retroaldol/aldol mechanism (carbon-carbon bond cleavage analogous to a class II aldolase reaction).</text>
</comment>
<comment type="catalytic activity">
    <reaction evidence="2 3 4 7 11 13">
        <text>L-ribulose 5-phosphate = D-xylulose 5-phosphate</text>
        <dbReference type="Rhea" id="RHEA:22368"/>
        <dbReference type="ChEBI" id="CHEBI:57737"/>
        <dbReference type="ChEBI" id="CHEBI:58226"/>
        <dbReference type="EC" id="5.1.3.4"/>
    </reaction>
</comment>
<comment type="cofactor">
    <cofactor evidence="2 4 6 7 13">
        <name>Zn(2+)</name>
        <dbReference type="ChEBI" id="CHEBI:29105"/>
    </cofactor>
    <text evidence="2 4 6 7 13">Binds 1 zinc ion per subunit (PubMed:10769139, PubMed:11732895, PubMed:11732896, PubMed:9548961). Also able to use cobalt and manganese ions, but less efficiently (PubMed:10769139).</text>
</comment>
<comment type="activity regulation">
    <text evidence="7">Inhibited by glycolohydroxamate at concentration above 0.1 mM.</text>
</comment>
<comment type="biophysicochemical properties">
    <kinetics>
        <KM evidence="4">0.17 uM for Zn(2+)</KM>
        <KM evidence="4">0.29 uM for Co(2+)</KM>
        <KM evidence="4">0.54 uM for Mn(2+)</KM>
        <KM evidence="4 7">47 uM for L-ribulose 5-phosphate (LRu5P) (with zinc ion)</KM>
        <KM evidence="13">87 uM for L-ribulose 5-phosphate (LRu5P) (with zinc ion)</KM>
        <KM evidence="11">95 uM for L-ribulose 5-phosphate (LRu5P) (with zinc ion)</KM>
        <KM evidence="4">110 uM for L-ribulose 5-phosphate (LRu5P) (with cobalt ion)</KM>
        <KM evidence="4">425 uM for L-ribulose 5-phosphate (LRu5P) (with manganese ion)</KM>
        <text evidence="3 4 7 13">kcat is 20.4 sec(-1) for L-ribulose 5-phosphate (LRu5P) as substrate (PubMed:9548961). kcat is 19.4 sec(-1) for L-ribulose 5-phosphate (LRu5P) as substrate (PubMed:11732896). kcat is 17.3 sec(-1) for L-ribulose 5-phosphate (LRu5P) as substrate (PubMed:10769139). kcat is 10.6 sec(-1) for L-ribulose 5-phosphate (LRu5P) as substrate (at pH 7) (PubMed:10769138). kcat is 4.23 sec(-1) for L-ribulose 5-phosphate (LRu5P) as substrate (at pH 5.5) (PubMed:10769138).</text>
    </kinetics>
    <phDependence>
        <text evidence="11">Optimum pH is 7.</text>
    </phDependence>
</comment>
<comment type="pathway">
    <text evidence="2 19">Carbohydrate degradation; L-arabinose degradation via L-ribulose; D-xylulose 5-phosphate from L-arabinose (bacterial route): step 3/3.</text>
</comment>
<comment type="subunit">
    <text evidence="2 6 7 11 13">Homotetramer.</text>
</comment>
<comment type="induction">
    <text evidence="5 9 10 12">Induced by arabinose. Transcription is dependent on the transcription factor AraC, the cAMP receptor protein (CRP) and cAMP (PubMed:2962192, PubMed:328165, PubMed:7768852). Also induced by L-lyxose (PubMed:10913097).</text>
</comment>
<comment type="mass spectrometry"/>
<comment type="disruption phenotype">
    <text evidence="8">Cells lacking this gene accumulate large amount of L-ribulose 5-phosphate when incubated with L-arabinose.</text>
</comment>
<comment type="similarity">
    <text evidence="2 15">Belongs to the aldolase class II family. AraD/FucA subfamily.</text>
</comment>
<feature type="chain" id="PRO_0000162919" description="L-ribulose-5-phosphate 4-epimerase AraD">
    <location>
        <begin position="1"/>
        <end position="231"/>
    </location>
</feature>
<feature type="active site" description="Proton donor/acceptor" evidence="2 18">
    <location>
        <position position="120"/>
    </location>
</feature>
<feature type="active site" description="Proton donor/acceptor" evidence="2 18">
    <location>
        <position position="229"/>
    </location>
</feature>
<feature type="binding site" evidence="1 2">
    <location>
        <begin position="27"/>
        <end position="28"/>
    </location>
    <ligand>
        <name>substrate</name>
    </ligand>
</feature>
<feature type="binding site" evidence="1 2">
    <location>
        <begin position="44"/>
        <end position="45"/>
    </location>
    <ligand>
        <name>substrate</name>
    </ligand>
</feature>
<feature type="binding site" evidence="1 2">
    <location>
        <begin position="74"/>
        <end position="75"/>
    </location>
    <ligand>
        <name>substrate</name>
    </ligand>
</feature>
<feature type="binding site" evidence="2 16 20">
    <location>
        <position position="76"/>
    </location>
    <ligand>
        <name>Zn(2+)</name>
        <dbReference type="ChEBI" id="CHEBI:29105"/>
    </ligand>
</feature>
<feature type="binding site" evidence="2 6 7 16 17 21 22">
    <location>
        <position position="95"/>
    </location>
    <ligand>
        <name>Zn(2+)</name>
        <dbReference type="ChEBI" id="CHEBI:29105"/>
    </ligand>
</feature>
<feature type="binding site" evidence="2 6 7 16 17 21 22">
    <location>
        <position position="97"/>
    </location>
    <ligand>
        <name>Zn(2+)</name>
        <dbReference type="ChEBI" id="CHEBI:29105"/>
    </ligand>
</feature>
<feature type="binding site" evidence="2 6 7 16 21 22">
    <location>
        <position position="171"/>
    </location>
    <ligand>
        <name>Zn(2+)</name>
        <dbReference type="ChEBI" id="CHEBI:29105"/>
    </ligand>
</feature>
<feature type="mutagenesis site" description="Strong decrease of the affinity for L-ribulose 5-phosphate (LRu5P)." evidence="7">
    <original>N</original>
    <variation>A</variation>
    <location>
        <position position="28"/>
    </location>
</feature>
<feature type="mutagenesis site" description="Strong decrease of the affinity for L-ribulose 5-phosphate (LRu5P)." evidence="7">
    <original>K</original>
    <variation>M</variation>
    <location>
        <position position="42"/>
    </location>
</feature>
<feature type="mutagenesis site" description="Mutant shows a strong decrease of the catalytic efficiency, but it retains considerable epimerase activity. The affinity for L-ribulose 5-phosphate (LRu5P) is relatively unaffected." evidence="7 13">
    <original>D</original>
    <variation>N</variation>
    <location>
        <position position="76"/>
    </location>
</feature>
<feature type="mutagenesis site" description="Mutant shows a strong decrease of the catalytic efficiency and a reduced affinity for Zn(2+)." evidence="4 13">
    <original>H</original>
    <variation>N</variation>
    <location>
        <position position="95"/>
    </location>
</feature>
<feature type="mutagenesis site" description="Mutant shows a strong decrease of the catalytic efficiency and a reduced affinity for Zn(2+). Inhibited by glycolaldehyde phosphate." evidence="4 13">
    <original>H</original>
    <variation>N</variation>
    <location>
        <position position="97"/>
    </location>
</feature>
<feature type="mutagenesis site" description="Loss of the epimerase activity due to an increased steric bulk introduced by the mutation which causes a conformational change that is incompatible with catalysis." evidence="7">
    <original>T</original>
    <variation>E</variation>
    <variation>Y</variation>
    <location>
        <position position="116"/>
    </location>
</feature>
<feature type="mutagenesis site" description="Loss of the epimerase activity." evidence="7">
    <original>D</original>
    <variation>N</variation>
    <location>
        <position position="120"/>
    </location>
</feature>
<feature type="mutagenesis site" description="Mutant shows a strong decrease of the catalytic efficiency, but it retains considerable epimerase activity. The affinity for L-ribulose 5-phosphate (LRu5P) is relatively unaffected." evidence="7">
    <original>E</original>
    <variation>Q</variation>
    <location>
        <position position="142"/>
    </location>
</feature>
<feature type="mutagenesis site" description="Mutant shows a strong decrease of the catalytic efficiency, but it retains considerable epimerase activity. The affinity for L-ribulose 5-phosphate (LRu5P) is relatively unaffected." evidence="7">
    <original>H</original>
    <variation>N</variation>
    <location>
        <position position="218"/>
    </location>
</feature>
<feature type="mutagenesis site" description="Loss of the epimerase activity." evidence="4 7">
    <original>Y</original>
    <variation>F</variation>
    <location>
        <position position="229"/>
    </location>
</feature>
<feature type="helix" evidence="23">
    <location>
        <begin position="3"/>
        <end position="18"/>
    </location>
</feature>
<feature type="strand" evidence="23">
    <location>
        <begin position="28"/>
        <end position="33"/>
    </location>
</feature>
<feature type="turn" evidence="23">
    <location>
        <begin position="34"/>
        <end position="37"/>
    </location>
</feature>
<feature type="strand" evidence="23">
    <location>
        <begin position="38"/>
        <end position="41"/>
    </location>
</feature>
<feature type="strand" evidence="23">
    <location>
        <begin position="43"/>
        <end position="45"/>
    </location>
</feature>
<feature type="turn" evidence="23">
    <location>
        <begin position="48"/>
        <end position="50"/>
    </location>
</feature>
<feature type="helix" evidence="23">
    <location>
        <begin position="53"/>
        <end position="55"/>
    </location>
</feature>
<feature type="strand" evidence="23">
    <location>
        <begin position="57"/>
        <end position="60"/>
    </location>
</feature>
<feature type="turn" evidence="23">
    <location>
        <begin position="61"/>
        <end position="63"/>
    </location>
</feature>
<feature type="strand" evidence="23">
    <location>
        <begin position="66"/>
        <end position="68"/>
    </location>
</feature>
<feature type="helix" evidence="23">
    <location>
        <begin position="77"/>
        <end position="86"/>
    </location>
</feature>
<feature type="strand" evidence="23">
    <location>
        <begin position="92"/>
        <end position="95"/>
    </location>
</feature>
<feature type="helix" evidence="23">
    <location>
        <begin position="99"/>
        <end position="107"/>
    </location>
</feature>
<feature type="helix" evidence="23">
    <location>
        <begin position="116"/>
        <end position="119"/>
    </location>
</feature>
<feature type="helix" evidence="23">
    <location>
        <begin position="134"/>
        <end position="138"/>
    </location>
</feature>
<feature type="helix" evidence="23">
    <location>
        <begin position="141"/>
        <end position="155"/>
    </location>
</feature>
<feature type="turn" evidence="23">
    <location>
        <begin position="160"/>
        <end position="162"/>
    </location>
</feature>
<feature type="strand" evidence="23">
    <location>
        <begin position="165"/>
        <end position="168"/>
    </location>
</feature>
<feature type="turn" evidence="23">
    <location>
        <begin position="169"/>
        <end position="171"/>
    </location>
</feature>
<feature type="strand" evidence="23">
    <location>
        <begin position="172"/>
        <end position="179"/>
    </location>
</feature>
<feature type="helix" evidence="23">
    <location>
        <begin position="180"/>
        <end position="203"/>
    </location>
</feature>
<feature type="helix" evidence="23">
    <location>
        <begin position="212"/>
        <end position="221"/>
    </location>
</feature>
<evidence type="ECO:0000250" key="1">
    <source>
        <dbReference type="UniProtKB" id="P0AB87"/>
    </source>
</evidence>
<evidence type="ECO:0000255" key="2">
    <source>
        <dbReference type="HAMAP-Rule" id="MF_00989"/>
    </source>
</evidence>
<evidence type="ECO:0000269" key="3">
    <source>
    </source>
</evidence>
<evidence type="ECO:0000269" key="4">
    <source>
    </source>
</evidence>
<evidence type="ECO:0000269" key="5">
    <source>
    </source>
</evidence>
<evidence type="ECO:0000269" key="6">
    <source>
    </source>
</evidence>
<evidence type="ECO:0000269" key="7">
    <source>
    </source>
</evidence>
<evidence type="ECO:0000269" key="8">
    <source>
    </source>
</evidence>
<evidence type="ECO:0000269" key="9">
    <source>
    </source>
</evidence>
<evidence type="ECO:0000269" key="10">
    <source>
    </source>
</evidence>
<evidence type="ECO:0000269" key="11">
    <source>
    </source>
</evidence>
<evidence type="ECO:0000269" key="12">
    <source>
    </source>
</evidence>
<evidence type="ECO:0000269" key="13">
    <source>
    </source>
</evidence>
<evidence type="ECO:0000303" key="14">
    <source>
    </source>
</evidence>
<evidence type="ECO:0000305" key="15"/>
<evidence type="ECO:0000305" key="16">
    <source>
    </source>
</evidence>
<evidence type="ECO:0000305" key="17">
    <source>
    </source>
</evidence>
<evidence type="ECO:0000305" key="18">
    <source>
    </source>
</evidence>
<evidence type="ECO:0000305" key="19">
    <source>
    </source>
</evidence>
<evidence type="ECO:0000305" key="20">
    <source>
    </source>
</evidence>
<evidence type="ECO:0007744" key="21">
    <source>
        <dbReference type="PDB" id="1JDI"/>
    </source>
</evidence>
<evidence type="ECO:0007744" key="22">
    <source>
        <dbReference type="PDB" id="1K0W"/>
    </source>
</evidence>
<evidence type="ECO:0007829" key="23">
    <source>
        <dbReference type="PDB" id="1K0W"/>
    </source>
</evidence>